<accession>Q72VT0</accession>
<gene>
    <name evidence="1" type="primary">pckA</name>
    <name type="ordered locus">LIC_10216</name>
</gene>
<name>PCKA_LEPIC</name>
<evidence type="ECO:0000255" key="1">
    <source>
        <dbReference type="HAMAP-Rule" id="MF_00453"/>
    </source>
</evidence>
<dbReference type="EC" id="4.1.1.49" evidence="1"/>
<dbReference type="EMBL" id="AE016823">
    <property type="protein sequence ID" value="AAS68844.1"/>
    <property type="molecule type" value="Genomic_DNA"/>
</dbReference>
<dbReference type="RefSeq" id="WP_001148872.1">
    <property type="nucleotide sequence ID" value="NC_005823.1"/>
</dbReference>
<dbReference type="SMR" id="Q72VT0"/>
<dbReference type="GeneID" id="61143574"/>
<dbReference type="KEGG" id="lic:LIC_10216"/>
<dbReference type="HOGENOM" id="CLU_018247_0_1_12"/>
<dbReference type="UniPathway" id="UPA00138"/>
<dbReference type="Proteomes" id="UP000007037">
    <property type="component" value="Chromosome I"/>
</dbReference>
<dbReference type="GO" id="GO:0005829">
    <property type="term" value="C:cytosol"/>
    <property type="evidence" value="ECO:0007669"/>
    <property type="project" value="TreeGrafter"/>
</dbReference>
<dbReference type="GO" id="GO:0005524">
    <property type="term" value="F:ATP binding"/>
    <property type="evidence" value="ECO:0007669"/>
    <property type="project" value="UniProtKB-UniRule"/>
</dbReference>
<dbReference type="GO" id="GO:0046872">
    <property type="term" value="F:metal ion binding"/>
    <property type="evidence" value="ECO:0007669"/>
    <property type="project" value="UniProtKB-KW"/>
</dbReference>
<dbReference type="GO" id="GO:0004612">
    <property type="term" value="F:phosphoenolpyruvate carboxykinase (ATP) activity"/>
    <property type="evidence" value="ECO:0007669"/>
    <property type="project" value="UniProtKB-UniRule"/>
</dbReference>
<dbReference type="GO" id="GO:0006094">
    <property type="term" value="P:gluconeogenesis"/>
    <property type="evidence" value="ECO:0007669"/>
    <property type="project" value="UniProtKB-UniRule"/>
</dbReference>
<dbReference type="CDD" id="cd00484">
    <property type="entry name" value="PEPCK_ATP"/>
    <property type="match status" value="1"/>
</dbReference>
<dbReference type="FunFam" id="2.170.8.10:FF:000001">
    <property type="entry name" value="Phosphoenolpyruvate carboxykinase (ATP)"/>
    <property type="match status" value="1"/>
</dbReference>
<dbReference type="FunFam" id="3.40.449.10:FF:000001">
    <property type="entry name" value="Phosphoenolpyruvate carboxykinase (ATP)"/>
    <property type="match status" value="1"/>
</dbReference>
<dbReference type="Gene3D" id="3.90.228.20">
    <property type="match status" value="1"/>
</dbReference>
<dbReference type="Gene3D" id="3.40.449.10">
    <property type="entry name" value="Phosphoenolpyruvate Carboxykinase, domain 1"/>
    <property type="match status" value="1"/>
</dbReference>
<dbReference type="Gene3D" id="2.170.8.10">
    <property type="entry name" value="Phosphoenolpyruvate Carboxykinase, domain 2"/>
    <property type="match status" value="1"/>
</dbReference>
<dbReference type="HAMAP" id="MF_00453">
    <property type="entry name" value="PEPCK_ATP"/>
    <property type="match status" value="1"/>
</dbReference>
<dbReference type="InterPro" id="IPR001272">
    <property type="entry name" value="PEP_carboxykinase_ATP"/>
</dbReference>
<dbReference type="InterPro" id="IPR013035">
    <property type="entry name" value="PEP_carboxykinase_C"/>
</dbReference>
<dbReference type="InterPro" id="IPR008210">
    <property type="entry name" value="PEP_carboxykinase_N"/>
</dbReference>
<dbReference type="InterPro" id="IPR015994">
    <property type="entry name" value="PEPCK_ATP_CS"/>
</dbReference>
<dbReference type="NCBIfam" id="TIGR00224">
    <property type="entry name" value="pckA"/>
    <property type="match status" value="1"/>
</dbReference>
<dbReference type="NCBIfam" id="NF006819">
    <property type="entry name" value="PRK09344.1-1"/>
    <property type="match status" value="1"/>
</dbReference>
<dbReference type="NCBIfam" id="NF006820">
    <property type="entry name" value="PRK09344.1-2"/>
    <property type="match status" value="1"/>
</dbReference>
<dbReference type="NCBIfam" id="NF006821">
    <property type="entry name" value="PRK09344.1-3"/>
    <property type="match status" value="1"/>
</dbReference>
<dbReference type="PANTHER" id="PTHR30031:SF0">
    <property type="entry name" value="PHOSPHOENOLPYRUVATE CARBOXYKINASE (ATP)"/>
    <property type="match status" value="1"/>
</dbReference>
<dbReference type="PANTHER" id="PTHR30031">
    <property type="entry name" value="PHOSPHOENOLPYRUVATE CARBOXYKINASE ATP"/>
    <property type="match status" value="1"/>
</dbReference>
<dbReference type="Pfam" id="PF01293">
    <property type="entry name" value="PEPCK_ATP"/>
    <property type="match status" value="1"/>
</dbReference>
<dbReference type="PIRSF" id="PIRSF006294">
    <property type="entry name" value="PEP_crbxkin"/>
    <property type="match status" value="1"/>
</dbReference>
<dbReference type="SUPFAM" id="SSF68923">
    <property type="entry name" value="PEP carboxykinase N-terminal domain"/>
    <property type="match status" value="1"/>
</dbReference>
<dbReference type="SUPFAM" id="SSF53795">
    <property type="entry name" value="PEP carboxykinase-like"/>
    <property type="match status" value="1"/>
</dbReference>
<dbReference type="PROSITE" id="PS00532">
    <property type="entry name" value="PEPCK_ATP"/>
    <property type="match status" value="1"/>
</dbReference>
<organism>
    <name type="scientific">Leptospira interrogans serogroup Icterohaemorrhagiae serovar copenhageni (strain Fiocruz L1-130)</name>
    <dbReference type="NCBI Taxonomy" id="267671"/>
    <lineage>
        <taxon>Bacteria</taxon>
        <taxon>Pseudomonadati</taxon>
        <taxon>Spirochaetota</taxon>
        <taxon>Spirochaetia</taxon>
        <taxon>Leptospirales</taxon>
        <taxon>Leptospiraceae</taxon>
        <taxon>Leptospira</taxon>
    </lineage>
</organism>
<comment type="function">
    <text evidence="1">Involved in the gluconeogenesis. Catalyzes the conversion of oxaloacetate (OAA) to phosphoenolpyruvate (PEP) through direct phosphoryl transfer between the nucleoside triphosphate and OAA.</text>
</comment>
<comment type="catalytic activity">
    <reaction evidence="1">
        <text>oxaloacetate + ATP = phosphoenolpyruvate + ADP + CO2</text>
        <dbReference type="Rhea" id="RHEA:18617"/>
        <dbReference type="ChEBI" id="CHEBI:16452"/>
        <dbReference type="ChEBI" id="CHEBI:16526"/>
        <dbReference type="ChEBI" id="CHEBI:30616"/>
        <dbReference type="ChEBI" id="CHEBI:58702"/>
        <dbReference type="ChEBI" id="CHEBI:456216"/>
        <dbReference type="EC" id="4.1.1.49"/>
    </reaction>
</comment>
<comment type="cofactor">
    <cofactor evidence="1">
        <name>Mn(2+)</name>
        <dbReference type="ChEBI" id="CHEBI:29035"/>
    </cofactor>
    <text evidence="1">Binds 1 Mn(2+) ion per subunit.</text>
</comment>
<comment type="pathway">
    <text evidence="1">Carbohydrate biosynthesis; gluconeogenesis.</text>
</comment>
<comment type="subcellular location">
    <subcellularLocation>
        <location evidence="1">Cytoplasm</location>
    </subcellularLocation>
</comment>
<comment type="similarity">
    <text evidence="1">Belongs to the phosphoenolpyruvate carboxykinase (ATP) family.</text>
</comment>
<sequence length="530" mass="59174">MQAQTQVKGLKELGLEPSEIFHNLSYDEIYEHEKKNGETVVSSNGTMMVDTGIFTGRSPKDKYFVDEPSSNGNIWWSHINFKVSEAIFDELYKKCVNYLSHKKLYVFDGYAGANPETRVSLRVVSEKAWQHHFCTNMFLRPTKEELVGLDPEFTIINACGIKNENFKQHGMNSEVFVIFHLAKKICIIGGTEYGGEMKKGIFSVMNYKLPLQGILSMHCSANVGQDGDTALFFGLSGTGKTTLSTDPNRKLIGDDEHGWDDNGIFNIEGGCYAKVINLDPKTEPDIYEAIRKDALLENVVYDPQTKIVDYSSAAKTENTRVSYPIFHINNIQVPSKGGHPKTIIFLTYDAFGVLPPVSKLSIEQAMYHFLSGYTAKVAGTERGIKEPTATFSACFGAAFMTLHPTKYAKLLGEKMKKHNVRAYLMNTGLVGGSYGVGKRMNLPSTRKIIDEILNGNIEKSEFVTHPVFQVAYPKTISGVDSAILDPREAWTDKAAYDQTAKKLGEMFIKNFKQYAEGSKDFDFTAFGPKI</sequence>
<protein>
    <recommendedName>
        <fullName evidence="1">Phosphoenolpyruvate carboxykinase (ATP)</fullName>
        <shortName evidence="1">PCK</shortName>
        <shortName evidence="1">PEP carboxykinase</shortName>
        <shortName evidence="1">PEPCK</shortName>
        <ecNumber evidence="1">4.1.1.49</ecNumber>
    </recommendedName>
</protein>
<reference key="1">
    <citation type="journal article" date="2004" name="J. Bacteriol.">
        <title>Comparative genomics of two Leptospira interrogans serovars reveals novel insights into physiology and pathogenesis.</title>
        <authorList>
            <person name="Nascimento A.L.T.O."/>
            <person name="Ko A.I."/>
            <person name="Martins E.A.L."/>
            <person name="Monteiro-Vitorello C.B."/>
            <person name="Ho P.L."/>
            <person name="Haake D.A."/>
            <person name="Verjovski-Almeida S."/>
            <person name="Hartskeerl R.A."/>
            <person name="Marques M.V."/>
            <person name="Oliveira M.C."/>
            <person name="Menck C.F.M."/>
            <person name="Leite L.C.C."/>
            <person name="Carrer H."/>
            <person name="Coutinho L.L."/>
            <person name="Degrave W.M."/>
            <person name="Dellagostin O.A."/>
            <person name="El-Dorry H."/>
            <person name="Ferro E.S."/>
            <person name="Ferro M.I.T."/>
            <person name="Furlan L.R."/>
            <person name="Gamberini M."/>
            <person name="Giglioti E.A."/>
            <person name="Goes-Neto A."/>
            <person name="Goldman G.H."/>
            <person name="Goldman M.H.S."/>
            <person name="Harakava R."/>
            <person name="Jeronimo S.M.B."/>
            <person name="Junqueira-de-Azevedo I.L.M."/>
            <person name="Kimura E.T."/>
            <person name="Kuramae E.E."/>
            <person name="Lemos E.G.M."/>
            <person name="Lemos M.V.F."/>
            <person name="Marino C.L."/>
            <person name="Nunes L.R."/>
            <person name="de Oliveira R.C."/>
            <person name="Pereira G.G."/>
            <person name="Reis M.S."/>
            <person name="Schriefer A."/>
            <person name="Siqueira W.J."/>
            <person name="Sommer P."/>
            <person name="Tsai S.M."/>
            <person name="Simpson A.J.G."/>
            <person name="Ferro J.A."/>
            <person name="Camargo L.E.A."/>
            <person name="Kitajima J.P."/>
            <person name="Setubal J.C."/>
            <person name="Van Sluys M.A."/>
        </authorList>
    </citation>
    <scope>NUCLEOTIDE SEQUENCE [LARGE SCALE GENOMIC DNA]</scope>
    <source>
        <strain>Fiocruz L1-130</strain>
    </source>
</reference>
<proteinExistence type="inferred from homology"/>
<keyword id="KW-0067">ATP-binding</keyword>
<keyword id="KW-0963">Cytoplasm</keyword>
<keyword id="KW-0210">Decarboxylase</keyword>
<keyword id="KW-0312">Gluconeogenesis</keyword>
<keyword id="KW-0456">Lyase</keyword>
<keyword id="KW-0464">Manganese</keyword>
<keyword id="KW-0479">Metal-binding</keyword>
<keyword id="KW-0547">Nucleotide-binding</keyword>
<feature type="chain" id="PRO_0000203825" description="Phosphoenolpyruvate carboxykinase (ATP)">
    <location>
        <begin position="1"/>
        <end position="530"/>
    </location>
</feature>
<feature type="binding site" evidence="1">
    <location>
        <position position="57"/>
    </location>
    <ligand>
        <name>substrate</name>
    </ligand>
</feature>
<feature type="binding site" evidence="1">
    <location>
        <position position="193"/>
    </location>
    <ligand>
        <name>substrate</name>
    </ligand>
</feature>
<feature type="binding site" evidence="1">
    <location>
        <position position="199"/>
    </location>
    <ligand>
        <name>ATP</name>
        <dbReference type="ChEBI" id="CHEBI:30616"/>
    </ligand>
</feature>
<feature type="binding site" evidence="1">
    <location>
        <position position="199"/>
    </location>
    <ligand>
        <name>Mn(2+)</name>
        <dbReference type="ChEBI" id="CHEBI:29035"/>
    </ligand>
</feature>
<feature type="binding site" evidence="1">
    <location>
        <position position="199"/>
    </location>
    <ligand>
        <name>substrate</name>
    </ligand>
</feature>
<feature type="binding site" evidence="1">
    <location>
        <position position="218"/>
    </location>
    <ligand>
        <name>ATP</name>
        <dbReference type="ChEBI" id="CHEBI:30616"/>
    </ligand>
</feature>
<feature type="binding site" evidence="1">
    <location>
        <position position="218"/>
    </location>
    <ligand>
        <name>Mn(2+)</name>
        <dbReference type="ChEBI" id="CHEBI:29035"/>
    </ligand>
</feature>
<feature type="binding site" evidence="1">
    <location>
        <begin position="234"/>
        <end position="242"/>
    </location>
    <ligand>
        <name>ATP</name>
        <dbReference type="ChEBI" id="CHEBI:30616"/>
    </ligand>
</feature>
<feature type="binding site" evidence="1">
    <location>
        <position position="255"/>
    </location>
    <ligand>
        <name>Mn(2+)</name>
        <dbReference type="ChEBI" id="CHEBI:29035"/>
    </ligand>
</feature>
<feature type="binding site" evidence="1">
    <location>
        <position position="283"/>
    </location>
    <ligand>
        <name>ATP</name>
        <dbReference type="ChEBI" id="CHEBI:30616"/>
    </ligand>
</feature>
<feature type="binding site" evidence="1">
    <location>
        <position position="320"/>
    </location>
    <ligand>
        <name>ATP</name>
        <dbReference type="ChEBI" id="CHEBI:30616"/>
    </ligand>
</feature>
<feature type="binding site" evidence="1">
    <location>
        <position position="320"/>
    </location>
    <ligand>
        <name>substrate</name>
    </ligand>
</feature>
<feature type="binding site" evidence="1">
    <location>
        <position position="445"/>
    </location>
    <ligand>
        <name>ATP</name>
        <dbReference type="ChEBI" id="CHEBI:30616"/>
    </ligand>
</feature>